<reference key="1">
    <citation type="submission" date="2008-08" db="EMBL/GenBank/DDBJ databases">
        <title>Complete sequence of Anaeromyxobacter sp. K.</title>
        <authorList>
            <consortium name="US DOE Joint Genome Institute"/>
            <person name="Lucas S."/>
            <person name="Copeland A."/>
            <person name="Lapidus A."/>
            <person name="Glavina del Rio T."/>
            <person name="Dalin E."/>
            <person name="Tice H."/>
            <person name="Bruce D."/>
            <person name="Goodwin L."/>
            <person name="Pitluck S."/>
            <person name="Saunders E."/>
            <person name="Brettin T."/>
            <person name="Detter J.C."/>
            <person name="Han C."/>
            <person name="Larimer F."/>
            <person name="Land M."/>
            <person name="Hauser L."/>
            <person name="Kyrpides N."/>
            <person name="Ovchinnikiva G."/>
            <person name="Beliaev A."/>
        </authorList>
    </citation>
    <scope>NUCLEOTIDE SEQUENCE [LARGE SCALE GENOMIC DNA]</scope>
    <source>
        <strain>K</strain>
    </source>
</reference>
<feature type="chain" id="PRO_1000100527" description="Adenylate kinase">
    <location>
        <begin position="1"/>
        <end position="214"/>
    </location>
</feature>
<feature type="region of interest" description="NMP" evidence="1">
    <location>
        <begin position="30"/>
        <end position="59"/>
    </location>
</feature>
<feature type="region of interest" description="LID" evidence="1">
    <location>
        <begin position="126"/>
        <end position="163"/>
    </location>
</feature>
<feature type="binding site" evidence="1">
    <location>
        <begin position="10"/>
        <end position="15"/>
    </location>
    <ligand>
        <name>ATP</name>
        <dbReference type="ChEBI" id="CHEBI:30616"/>
    </ligand>
</feature>
<feature type="binding site" evidence="1">
    <location>
        <position position="31"/>
    </location>
    <ligand>
        <name>AMP</name>
        <dbReference type="ChEBI" id="CHEBI:456215"/>
    </ligand>
</feature>
<feature type="binding site" evidence="1">
    <location>
        <position position="36"/>
    </location>
    <ligand>
        <name>AMP</name>
        <dbReference type="ChEBI" id="CHEBI:456215"/>
    </ligand>
</feature>
<feature type="binding site" evidence="1">
    <location>
        <begin position="57"/>
        <end position="59"/>
    </location>
    <ligand>
        <name>AMP</name>
        <dbReference type="ChEBI" id="CHEBI:456215"/>
    </ligand>
</feature>
<feature type="binding site" evidence="1">
    <location>
        <begin position="85"/>
        <end position="88"/>
    </location>
    <ligand>
        <name>AMP</name>
        <dbReference type="ChEBI" id="CHEBI:456215"/>
    </ligand>
</feature>
<feature type="binding site" evidence="1">
    <location>
        <position position="92"/>
    </location>
    <ligand>
        <name>AMP</name>
        <dbReference type="ChEBI" id="CHEBI:456215"/>
    </ligand>
</feature>
<feature type="binding site" evidence="1">
    <location>
        <position position="127"/>
    </location>
    <ligand>
        <name>ATP</name>
        <dbReference type="ChEBI" id="CHEBI:30616"/>
    </ligand>
</feature>
<feature type="binding site" evidence="1">
    <location>
        <position position="130"/>
    </location>
    <ligand>
        <name>Zn(2+)</name>
        <dbReference type="ChEBI" id="CHEBI:29105"/>
        <note>structural</note>
    </ligand>
</feature>
<feature type="binding site" evidence="1">
    <location>
        <position position="133"/>
    </location>
    <ligand>
        <name>Zn(2+)</name>
        <dbReference type="ChEBI" id="CHEBI:29105"/>
        <note>structural</note>
    </ligand>
</feature>
<feature type="binding site" evidence="1">
    <location>
        <begin position="136"/>
        <end position="137"/>
    </location>
    <ligand>
        <name>ATP</name>
        <dbReference type="ChEBI" id="CHEBI:30616"/>
    </ligand>
</feature>
<feature type="binding site" evidence="1">
    <location>
        <position position="150"/>
    </location>
    <ligand>
        <name>Zn(2+)</name>
        <dbReference type="ChEBI" id="CHEBI:29105"/>
        <note>structural</note>
    </ligand>
</feature>
<feature type="binding site" evidence="1">
    <location>
        <position position="153"/>
    </location>
    <ligand>
        <name>Zn(2+)</name>
        <dbReference type="ChEBI" id="CHEBI:29105"/>
        <note>structural</note>
    </ligand>
</feature>
<feature type="binding site" evidence="1">
    <location>
        <position position="160"/>
    </location>
    <ligand>
        <name>AMP</name>
        <dbReference type="ChEBI" id="CHEBI:456215"/>
    </ligand>
</feature>
<feature type="binding site" evidence="1">
    <location>
        <position position="171"/>
    </location>
    <ligand>
        <name>AMP</name>
        <dbReference type="ChEBI" id="CHEBI:456215"/>
    </ligand>
</feature>
<feature type="binding site" evidence="1">
    <location>
        <position position="199"/>
    </location>
    <ligand>
        <name>ATP</name>
        <dbReference type="ChEBI" id="CHEBI:30616"/>
    </ligand>
</feature>
<gene>
    <name evidence="1" type="primary">adk</name>
    <name type="ordered locus">AnaeK_1954</name>
</gene>
<proteinExistence type="inferred from homology"/>
<keyword id="KW-0067">ATP-binding</keyword>
<keyword id="KW-0963">Cytoplasm</keyword>
<keyword id="KW-0418">Kinase</keyword>
<keyword id="KW-0479">Metal-binding</keyword>
<keyword id="KW-0545">Nucleotide biosynthesis</keyword>
<keyword id="KW-0547">Nucleotide-binding</keyword>
<keyword id="KW-0808">Transferase</keyword>
<keyword id="KW-0862">Zinc</keyword>
<evidence type="ECO:0000255" key="1">
    <source>
        <dbReference type="HAMAP-Rule" id="MF_00235"/>
    </source>
</evidence>
<organism>
    <name type="scientific">Anaeromyxobacter sp. (strain K)</name>
    <dbReference type="NCBI Taxonomy" id="447217"/>
    <lineage>
        <taxon>Bacteria</taxon>
        <taxon>Pseudomonadati</taxon>
        <taxon>Myxococcota</taxon>
        <taxon>Myxococcia</taxon>
        <taxon>Myxococcales</taxon>
        <taxon>Cystobacterineae</taxon>
        <taxon>Anaeromyxobacteraceae</taxon>
        <taxon>Anaeromyxobacter</taxon>
    </lineage>
</organism>
<name>KAD_ANASK</name>
<sequence length="214" mass="23513">MILILLGPPGAGKGTQAKLLSSELGIPHISTGDMFRDHKARGTEIGKQVQAIMDAGGLVTDDITNAMVKERLSRPDVAPGFILDGYPRTVVQAGYLDGLLRSLGRSIDRALSYEVPEELVVERISGRRSCPRCGAVYHVSQNPPHRAGFCDRDDTALVQREDDKPENVRKRMQEYGTKTEPLKRYYRDRGELSDVEGVGTPEGILAVTKKVLGR</sequence>
<protein>
    <recommendedName>
        <fullName evidence="1">Adenylate kinase</fullName>
        <shortName evidence="1">AK</shortName>
        <ecNumber evidence="1">2.7.4.3</ecNumber>
    </recommendedName>
    <alternativeName>
        <fullName evidence="1">ATP-AMP transphosphorylase</fullName>
    </alternativeName>
    <alternativeName>
        <fullName evidence="1">ATP:AMP phosphotransferase</fullName>
    </alternativeName>
    <alternativeName>
        <fullName evidence="1">Adenylate monophosphate kinase</fullName>
    </alternativeName>
</protein>
<dbReference type="EC" id="2.7.4.3" evidence="1"/>
<dbReference type="EMBL" id="CP001131">
    <property type="protein sequence ID" value="ACG73182.1"/>
    <property type="molecule type" value="Genomic_DNA"/>
</dbReference>
<dbReference type="RefSeq" id="WP_012525987.1">
    <property type="nucleotide sequence ID" value="NC_011145.1"/>
</dbReference>
<dbReference type="SMR" id="B4UBC0"/>
<dbReference type="KEGG" id="ank:AnaeK_1954"/>
<dbReference type="HOGENOM" id="CLU_032354_1_2_7"/>
<dbReference type="OrthoDB" id="9805030at2"/>
<dbReference type="UniPathway" id="UPA00588">
    <property type="reaction ID" value="UER00649"/>
</dbReference>
<dbReference type="Proteomes" id="UP000001871">
    <property type="component" value="Chromosome"/>
</dbReference>
<dbReference type="GO" id="GO:0005737">
    <property type="term" value="C:cytoplasm"/>
    <property type="evidence" value="ECO:0007669"/>
    <property type="project" value="UniProtKB-SubCell"/>
</dbReference>
<dbReference type="GO" id="GO:0004017">
    <property type="term" value="F:adenylate kinase activity"/>
    <property type="evidence" value="ECO:0007669"/>
    <property type="project" value="UniProtKB-UniRule"/>
</dbReference>
<dbReference type="GO" id="GO:0005524">
    <property type="term" value="F:ATP binding"/>
    <property type="evidence" value="ECO:0007669"/>
    <property type="project" value="UniProtKB-UniRule"/>
</dbReference>
<dbReference type="GO" id="GO:0008270">
    <property type="term" value="F:zinc ion binding"/>
    <property type="evidence" value="ECO:0007669"/>
    <property type="project" value="UniProtKB-UniRule"/>
</dbReference>
<dbReference type="GO" id="GO:0044209">
    <property type="term" value="P:AMP salvage"/>
    <property type="evidence" value="ECO:0007669"/>
    <property type="project" value="UniProtKB-UniRule"/>
</dbReference>
<dbReference type="CDD" id="cd01428">
    <property type="entry name" value="ADK"/>
    <property type="match status" value="1"/>
</dbReference>
<dbReference type="FunFam" id="3.40.50.300:FF:000106">
    <property type="entry name" value="Adenylate kinase mitochondrial"/>
    <property type="match status" value="1"/>
</dbReference>
<dbReference type="Gene3D" id="3.40.50.300">
    <property type="entry name" value="P-loop containing nucleotide triphosphate hydrolases"/>
    <property type="match status" value="1"/>
</dbReference>
<dbReference type="HAMAP" id="MF_00235">
    <property type="entry name" value="Adenylate_kinase_Adk"/>
    <property type="match status" value="1"/>
</dbReference>
<dbReference type="InterPro" id="IPR006259">
    <property type="entry name" value="Adenyl_kin_sub"/>
</dbReference>
<dbReference type="InterPro" id="IPR000850">
    <property type="entry name" value="Adenylat/UMP-CMP_kin"/>
</dbReference>
<dbReference type="InterPro" id="IPR033690">
    <property type="entry name" value="Adenylat_kinase_CS"/>
</dbReference>
<dbReference type="InterPro" id="IPR007862">
    <property type="entry name" value="Adenylate_kinase_lid-dom"/>
</dbReference>
<dbReference type="InterPro" id="IPR027417">
    <property type="entry name" value="P-loop_NTPase"/>
</dbReference>
<dbReference type="NCBIfam" id="TIGR01351">
    <property type="entry name" value="adk"/>
    <property type="match status" value="1"/>
</dbReference>
<dbReference type="NCBIfam" id="NF001380">
    <property type="entry name" value="PRK00279.1-2"/>
    <property type="match status" value="1"/>
</dbReference>
<dbReference type="NCBIfam" id="NF001381">
    <property type="entry name" value="PRK00279.1-3"/>
    <property type="match status" value="1"/>
</dbReference>
<dbReference type="NCBIfam" id="NF011100">
    <property type="entry name" value="PRK14527.1"/>
    <property type="match status" value="1"/>
</dbReference>
<dbReference type="PANTHER" id="PTHR23359">
    <property type="entry name" value="NUCLEOTIDE KINASE"/>
    <property type="match status" value="1"/>
</dbReference>
<dbReference type="Pfam" id="PF00406">
    <property type="entry name" value="ADK"/>
    <property type="match status" value="1"/>
</dbReference>
<dbReference type="Pfam" id="PF05191">
    <property type="entry name" value="ADK_lid"/>
    <property type="match status" value="1"/>
</dbReference>
<dbReference type="PRINTS" id="PR00094">
    <property type="entry name" value="ADENYLTKNASE"/>
</dbReference>
<dbReference type="SUPFAM" id="SSF52540">
    <property type="entry name" value="P-loop containing nucleoside triphosphate hydrolases"/>
    <property type="match status" value="1"/>
</dbReference>
<dbReference type="PROSITE" id="PS00113">
    <property type="entry name" value="ADENYLATE_KINASE"/>
    <property type="match status" value="1"/>
</dbReference>
<accession>B4UBC0</accession>
<comment type="function">
    <text evidence="1">Catalyzes the reversible transfer of the terminal phosphate group between ATP and AMP. Plays an important role in cellular energy homeostasis and in adenine nucleotide metabolism.</text>
</comment>
<comment type="catalytic activity">
    <reaction evidence="1">
        <text>AMP + ATP = 2 ADP</text>
        <dbReference type="Rhea" id="RHEA:12973"/>
        <dbReference type="ChEBI" id="CHEBI:30616"/>
        <dbReference type="ChEBI" id="CHEBI:456215"/>
        <dbReference type="ChEBI" id="CHEBI:456216"/>
        <dbReference type="EC" id="2.7.4.3"/>
    </reaction>
</comment>
<comment type="pathway">
    <text evidence="1">Purine metabolism; AMP biosynthesis via salvage pathway; AMP from ADP: step 1/1.</text>
</comment>
<comment type="subunit">
    <text evidence="1">Monomer.</text>
</comment>
<comment type="subcellular location">
    <subcellularLocation>
        <location evidence="1">Cytoplasm</location>
    </subcellularLocation>
</comment>
<comment type="domain">
    <text evidence="1">Consists of three domains, a large central CORE domain and two small peripheral domains, NMPbind and LID, which undergo movements during catalysis. The LID domain closes over the site of phosphoryl transfer upon ATP binding. Assembling and dissambling the active center during each catalytic cycle provides an effective means to prevent ATP hydrolysis. Some bacteria have evolved a zinc-coordinating structure that stabilizes the LID domain.</text>
</comment>
<comment type="similarity">
    <text evidence="1">Belongs to the adenylate kinase family.</text>
</comment>